<reference key="1">
    <citation type="journal article" date="2006" name="Mol. Biol. Evol.">
        <title>The complete chloroplast genome sequence of Pelargonium x hortorum: organization and evolution of the largest and most highly rearranged chloroplast genome of land plants.</title>
        <authorList>
            <person name="Chumley T.W."/>
            <person name="Palmer J.D."/>
            <person name="Mower J.P."/>
            <person name="Fourcade H.M."/>
            <person name="Calie P.J."/>
            <person name="Boore J.L."/>
            <person name="Jansen R.K."/>
        </authorList>
    </citation>
    <scope>NUCLEOTIDE SEQUENCE [LARGE SCALE GENOMIC DNA]</scope>
    <source>
        <strain>cv. Ringo White</strain>
    </source>
</reference>
<organism>
    <name type="scientific">Pelargonium hortorum</name>
    <name type="common">Common geranium</name>
    <name type="synonym">Pelargonium inquinans x Pelargonium zonale</name>
    <dbReference type="NCBI Taxonomy" id="4031"/>
    <lineage>
        <taxon>Eukaryota</taxon>
        <taxon>Viridiplantae</taxon>
        <taxon>Streptophyta</taxon>
        <taxon>Embryophyta</taxon>
        <taxon>Tracheophyta</taxon>
        <taxon>Spermatophyta</taxon>
        <taxon>Magnoliopsida</taxon>
        <taxon>eudicotyledons</taxon>
        <taxon>Gunneridae</taxon>
        <taxon>Pentapetalae</taxon>
        <taxon>rosids</taxon>
        <taxon>malvids</taxon>
        <taxon>Geraniales</taxon>
        <taxon>Geraniaceae</taxon>
        <taxon>Pelargonium</taxon>
    </lineage>
</organism>
<protein>
    <recommendedName>
        <fullName evidence="2">Cytochrome b6-f complex subunit 4</fullName>
    </recommendedName>
    <alternativeName>
        <fullName evidence="2">17 kDa polypeptide</fullName>
    </alternativeName>
</protein>
<dbReference type="EMBL" id="DQ897681">
    <property type="protein sequence ID" value="ABI17336.1"/>
    <property type="molecule type" value="Genomic_DNA"/>
</dbReference>
<dbReference type="EMBL" id="DQ897681">
    <property type="protein sequence ID" value="ABI17304.1"/>
    <property type="molecule type" value="Genomic_DNA"/>
</dbReference>
<dbReference type="RefSeq" id="YP_784112.1">
    <property type="nucleotide sequence ID" value="NC_008454.1"/>
</dbReference>
<dbReference type="RefSeq" id="YP_784144.1">
    <property type="nucleotide sequence ID" value="NC_008454.1"/>
</dbReference>
<dbReference type="SMR" id="Q06FN7"/>
<dbReference type="GeneID" id="4362873"/>
<dbReference type="GeneID" id="4362975"/>
<dbReference type="GO" id="GO:0009535">
    <property type="term" value="C:chloroplast thylakoid membrane"/>
    <property type="evidence" value="ECO:0007669"/>
    <property type="project" value="UniProtKB-SubCell"/>
</dbReference>
<dbReference type="GO" id="GO:0045158">
    <property type="term" value="F:electron transporter, transferring electrons within cytochrome b6/f complex of photosystem II activity"/>
    <property type="evidence" value="ECO:0007669"/>
    <property type="project" value="UniProtKB-UniRule"/>
</dbReference>
<dbReference type="GO" id="GO:0045156">
    <property type="term" value="F:electron transporter, transferring electrons within the cyclic electron transport pathway of photosynthesis activity"/>
    <property type="evidence" value="ECO:0007669"/>
    <property type="project" value="InterPro"/>
</dbReference>
<dbReference type="GO" id="GO:0016491">
    <property type="term" value="F:oxidoreductase activity"/>
    <property type="evidence" value="ECO:0007669"/>
    <property type="project" value="InterPro"/>
</dbReference>
<dbReference type="GO" id="GO:0009767">
    <property type="term" value="P:photosynthetic electron transport chain"/>
    <property type="evidence" value="ECO:0007669"/>
    <property type="project" value="InterPro"/>
</dbReference>
<dbReference type="CDD" id="cd00290">
    <property type="entry name" value="cytochrome_b_C"/>
    <property type="match status" value="1"/>
</dbReference>
<dbReference type="FunFam" id="1.10.287.980:FF:000001">
    <property type="entry name" value="Cytochrome b6-f complex subunit 4"/>
    <property type="match status" value="1"/>
</dbReference>
<dbReference type="FunFam" id="1.20.5.510:FF:000002">
    <property type="entry name" value="Cytochrome b6-f complex subunit 4"/>
    <property type="match status" value="1"/>
</dbReference>
<dbReference type="Gene3D" id="1.10.287.980">
    <property type="entry name" value="plastocyanin oxidoreductase"/>
    <property type="match status" value="1"/>
</dbReference>
<dbReference type="Gene3D" id="1.20.5.510">
    <property type="entry name" value="Single helix bin"/>
    <property type="match status" value="1"/>
</dbReference>
<dbReference type="HAMAP" id="MF_01344">
    <property type="entry name" value="Cytb6_f_subIV"/>
    <property type="match status" value="1"/>
</dbReference>
<dbReference type="InterPro" id="IPR005798">
    <property type="entry name" value="Cyt_b/b6_C"/>
</dbReference>
<dbReference type="InterPro" id="IPR036150">
    <property type="entry name" value="Cyt_b/b6_C_sf"/>
</dbReference>
<dbReference type="InterPro" id="IPR005870">
    <property type="entry name" value="Cyt_b6/f_cplx_suIV"/>
</dbReference>
<dbReference type="InterPro" id="IPR048260">
    <property type="entry name" value="Cytochrome_b_C_euk/bac"/>
</dbReference>
<dbReference type="NCBIfam" id="TIGR01156">
    <property type="entry name" value="cytb6_f_IV"/>
    <property type="match status" value="1"/>
</dbReference>
<dbReference type="PANTHER" id="PTHR19271">
    <property type="entry name" value="CYTOCHROME B"/>
    <property type="match status" value="1"/>
</dbReference>
<dbReference type="PANTHER" id="PTHR19271:SF40">
    <property type="entry name" value="CYTOCHROME B"/>
    <property type="match status" value="1"/>
</dbReference>
<dbReference type="Pfam" id="PF00032">
    <property type="entry name" value="Cytochrom_B_C"/>
    <property type="match status" value="1"/>
</dbReference>
<dbReference type="PIRSF" id="PIRSF000033">
    <property type="entry name" value="B6f_17K"/>
    <property type="match status" value="1"/>
</dbReference>
<dbReference type="SUPFAM" id="SSF81648">
    <property type="entry name" value="a domain/subunit of cytochrome bc1 complex (Ubiquinol-cytochrome c reductase)"/>
    <property type="match status" value="1"/>
</dbReference>
<dbReference type="PROSITE" id="PS51003">
    <property type="entry name" value="CYTB_CTER"/>
    <property type="match status" value="1"/>
</dbReference>
<proteinExistence type="inferred from homology"/>
<gene>
    <name evidence="2" type="primary">petD</name>
</gene>
<evidence type="ECO:0000250" key="1"/>
<evidence type="ECO:0000255" key="2">
    <source>
        <dbReference type="HAMAP-Rule" id="MF_01344"/>
    </source>
</evidence>
<keyword id="KW-0150">Chloroplast</keyword>
<keyword id="KW-0249">Electron transport</keyword>
<keyword id="KW-0472">Membrane</keyword>
<keyword id="KW-0602">Photosynthesis</keyword>
<keyword id="KW-0934">Plastid</keyword>
<keyword id="KW-0793">Thylakoid</keyword>
<keyword id="KW-0812">Transmembrane</keyword>
<keyword id="KW-1133">Transmembrane helix</keyword>
<keyword id="KW-0813">Transport</keyword>
<accession>Q06FN7</accession>
<comment type="function">
    <text evidence="2">Component of the cytochrome b6-f complex, which mediates electron transfer between photosystem II (PSII) and photosystem I (PSI), cyclic electron flow around PSI, and state transitions.</text>
</comment>
<comment type="subunit">
    <text evidence="1">The 4 large subunits of the cytochrome b6-f complex are cytochrome b6, subunit IV (17 kDa polypeptide, petD), cytochrome f and the Rieske protein, while the 4 small subunits are petG, petL, petM and petN. The complex functions as a dimer (By similarity).</text>
</comment>
<comment type="subcellular location">
    <subcellularLocation>
        <location evidence="2">Plastid</location>
        <location evidence="2">Chloroplast thylakoid membrane</location>
        <topology evidence="2">Multi-pass membrane protein</topology>
    </subcellularLocation>
</comment>
<comment type="similarity">
    <text evidence="2">Belongs to the cytochrome b family. PetD subfamily.</text>
</comment>
<name>PETD_PELHO</name>
<feature type="chain" id="PRO_0000276542" description="Cytochrome b6-f complex subunit 4">
    <location>
        <begin position="1"/>
        <end position="163"/>
    </location>
</feature>
<feature type="transmembrane region" description="Helical" evidence="2">
    <location>
        <begin position="36"/>
        <end position="56"/>
    </location>
</feature>
<feature type="transmembrane region" description="Helical" evidence="2">
    <location>
        <begin position="95"/>
        <end position="115"/>
    </location>
</feature>
<feature type="transmembrane region" description="Helical" evidence="2">
    <location>
        <begin position="131"/>
        <end position="151"/>
    </location>
</feature>
<geneLocation type="chloroplast"/>
<sequence>MGVTKKPDLNDPVLRAKLAKGMGHNYYGEPAWPNDLLYIFPVVILGTIACNGGLAVLEPSMIGEPADPFATPLEILPEWYFFPVFQILRTVPNKLLGVLLMVSVPAGLLTVPFLENVNKFQNPFRRPVATTVFLVGTLVALWLGIGATLPIEKSLTLGLFSIK</sequence>